<evidence type="ECO:0000255" key="1">
    <source>
        <dbReference type="HAMAP-Rule" id="MF_00833"/>
    </source>
</evidence>
<name>RUTF_ECO81</name>
<comment type="function">
    <text evidence="1">Catalyzes the reduction of FMN to FMNH2 which is used to reduce pyrimidine by RutA via the Rut pathway.</text>
</comment>
<comment type="catalytic activity">
    <reaction evidence="1">
        <text>FMNH2 + NAD(+) = FMN + NADH + 2 H(+)</text>
        <dbReference type="Rhea" id="RHEA:21620"/>
        <dbReference type="ChEBI" id="CHEBI:15378"/>
        <dbReference type="ChEBI" id="CHEBI:57540"/>
        <dbReference type="ChEBI" id="CHEBI:57618"/>
        <dbReference type="ChEBI" id="CHEBI:57945"/>
        <dbReference type="ChEBI" id="CHEBI:58210"/>
        <dbReference type="EC" id="1.5.1.42"/>
    </reaction>
</comment>
<comment type="induction">
    <text evidence="1">Up-regulated by the nitrogen regulatory protein C (NtrC also called GlnG) and repressed by RutR.</text>
</comment>
<comment type="similarity">
    <text evidence="1">Belongs to the non-flavoprotein flavin reductase family. RutF subfamily.</text>
</comment>
<dbReference type="EC" id="1.5.1.42" evidence="1"/>
<dbReference type="EMBL" id="CU928162">
    <property type="protein sequence ID" value="CAR07364.1"/>
    <property type="molecule type" value="Genomic_DNA"/>
</dbReference>
<dbReference type="RefSeq" id="WP_001028095.1">
    <property type="nucleotide sequence ID" value="NC_011745.1"/>
</dbReference>
<dbReference type="SMR" id="B7MQ18"/>
<dbReference type="GeneID" id="75171083"/>
<dbReference type="KEGG" id="ecq:ECED1_1163"/>
<dbReference type="HOGENOM" id="CLU_059021_2_2_6"/>
<dbReference type="Proteomes" id="UP000000748">
    <property type="component" value="Chromosome"/>
</dbReference>
<dbReference type="GO" id="GO:0010181">
    <property type="term" value="F:FMN binding"/>
    <property type="evidence" value="ECO:0007669"/>
    <property type="project" value="InterPro"/>
</dbReference>
<dbReference type="GO" id="GO:0052874">
    <property type="term" value="F:FMN reductase (NADH) activity"/>
    <property type="evidence" value="ECO:0007669"/>
    <property type="project" value="UniProtKB-EC"/>
</dbReference>
<dbReference type="GO" id="GO:0008752">
    <property type="term" value="F:FMN reductase [NAD(P)H] activity"/>
    <property type="evidence" value="ECO:0007669"/>
    <property type="project" value="InterPro"/>
</dbReference>
<dbReference type="GO" id="GO:0042602">
    <property type="term" value="F:riboflavin reductase (NADPH) activity"/>
    <property type="evidence" value="ECO:0007669"/>
    <property type="project" value="UniProtKB-UniRule"/>
</dbReference>
<dbReference type="GO" id="GO:0019740">
    <property type="term" value="P:nitrogen utilization"/>
    <property type="evidence" value="ECO:0007669"/>
    <property type="project" value="UniProtKB-UniRule"/>
</dbReference>
<dbReference type="GO" id="GO:0006212">
    <property type="term" value="P:uracil catabolic process"/>
    <property type="evidence" value="ECO:0007669"/>
    <property type="project" value="UniProtKB-UniRule"/>
</dbReference>
<dbReference type="FunFam" id="2.30.110.10:FF:000002">
    <property type="entry name" value="FMN reductase (NADH) RutF"/>
    <property type="match status" value="1"/>
</dbReference>
<dbReference type="Gene3D" id="2.30.110.10">
    <property type="entry name" value="Electron Transport, Fmn-binding Protein, Chain A"/>
    <property type="match status" value="1"/>
</dbReference>
<dbReference type="HAMAP" id="MF_00833">
    <property type="entry name" value="RutF"/>
    <property type="match status" value="1"/>
</dbReference>
<dbReference type="InterPro" id="IPR002563">
    <property type="entry name" value="Flavin_Rdtase-like_dom"/>
</dbReference>
<dbReference type="InterPro" id="IPR050268">
    <property type="entry name" value="NADH-dep_flavin_reductase"/>
</dbReference>
<dbReference type="InterPro" id="IPR019917">
    <property type="entry name" value="RutF"/>
</dbReference>
<dbReference type="InterPro" id="IPR012349">
    <property type="entry name" value="Split_barrel_FMN-bd"/>
</dbReference>
<dbReference type="NCBIfam" id="TIGR03615">
    <property type="entry name" value="RutF"/>
    <property type="match status" value="1"/>
</dbReference>
<dbReference type="PANTHER" id="PTHR30466">
    <property type="entry name" value="FLAVIN REDUCTASE"/>
    <property type="match status" value="1"/>
</dbReference>
<dbReference type="PANTHER" id="PTHR30466:SF1">
    <property type="entry name" value="FMN REDUCTASE (NADH) RUTF"/>
    <property type="match status" value="1"/>
</dbReference>
<dbReference type="Pfam" id="PF01613">
    <property type="entry name" value="Flavin_Reduct"/>
    <property type="match status" value="1"/>
</dbReference>
<dbReference type="SMART" id="SM00903">
    <property type="entry name" value="Flavin_Reduct"/>
    <property type="match status" value="1"/>
</dbReference>
<dbReference type="SUPFAM" id="SSF50475">
    <property type="entry name" value="FMN-binding split barrel"/>
    <property type="match status" value="1"/>
</dbReference>
<accession>B7MQ18</accession>
<organism>
    <name type="scientific">Escherichia coli O81 (strain ED1a)</name>
    <dbReference type="NCBI Taxonomy" id="585397"/>
    <lineage>
        <taxon>Bacteria</taxon>
        <taxon>Pseudomonadati</taxon>
        <taxon>Pseudomonadota</taxon>
        <taxon>Gammaproteobacteria</taxon>
        <taxon>Enterobacterales</taxon>
        <taxon>Enterobacteriaceae</taxon>
        <taxon>Escherichia</taxon>
    </lineage>
</organism>
<keyword id="KW-0285">Flavoprotein</keyword>
<keyword id="KW-0288">FMN</keyword>
<keyword id="KW-0520">NAD</keyword>
<keyword id="KW-0560">Oxidoreductase</keyword>
<feature type="chain" id="PRO_0000403026" description="FMN reductase (NADH) RutF">
    <location>
        <begin position="1"/>
        <end position="164"/>
    </location>
</feature>
<sequence>MNIVDQQTFRDAMSCMGAAVNIITTDGPAGRAGFTASAVCSVTDTPPTLLVCLNRGASVWPVFNENRTLCVNTLSAGQEPLSNLFGGKTPMEHRFAAARWQTGVTGCPQLEEALVSFDCRISQVVSVGTHDILFCAIEAIHRHATPYGLVWFDRSYHALMRPAC</sequence>
<gene>
    <name evidence="1" type="primary">rutF</name>
    <name type="ordered locus">ECED1_1163</name>
</gene>
<reference key="1">
    <citation type="journal article" date="2009" name="PLoS Genet.">
        <title>Organised genome dynamics in the Escherichia coli species results in highly diverse adaptive paths.</title>
        <authorList>
            <person name="Touchon M."/>
            <person name="Hoede C."/>
            <person name="Tenaillon O."/>
            <person name="Barbe V."/>
            <person name="Baeriswyl S."/>
            <person name="Bidet P."/>
            <person name="Bingen E."/>
            <person name="Bonacorsi S."/>
            <person name="Bouchier C."/>
            <person name="Bouvet O."/>
            <person name="Calteau A."/>
            <person name="Chiapello H."/>
            <person name="Clermont O."/>
            <person name="Cruveiller S."/>
            <person name="Danchin A."/>
            <person name="Diard M."/>
            <person name="Dossat C."/>
            <person name="Karoui M.E."/>
            <person name="Frapy E."/>
            <person name="Garry L."/>
            <person name="Ghigo J.M."/>
            <person name="Gilles A.M."/>
            <person name="Johnson J."/>
            <person name="Le Bouguenec C."/>
            <person name="Lescat M."/>
            <person name="Mangenot S."/>
            <person name="Martinez-Jehanne V."/>
            <person name="Matic I."/>
            <person name="Nassif X."/>
            <person name="Oztas S."/>
            <person name="Petit M.A."/>
            <person name="Pichon C."/>
            <person name="Rouy Z."/>
            <person name="Ruf C.S."/>
            <person name="Schneider D."/>
            <person name="Tourret J."/>
            <person name="Vacherie B."/>
            <person name="Vallenet D."/>
            <person name="Medigue C."/>
            <person name="Rocha E.P.C."/>
            <person name="Denamur E."/>
        </authorList>
    </citation>
    <scope>NUCLEOTIDE SEQUENCE [LARGE SCALE GENOMIC DNA]</scope>
    <source>
        <strain>ED1a</strain>
    </source>
</reference>
<proteinExistence type="inferred from homology"/>
<protein>
    <recommendedName>
        <fullName evidence="1">FMN reductase (NADH) RutF</fullName>
        <ecNumber evidence="1">1.5.1.42</ecNumber>
    </recommendedName>
    <alternativeName>
        <fullName evidence="1">FMN reductase</fullName>
    </alternativeName>
    <alternativeName>
        <fullName evidence="1">NADH-flavin reductase RutF</fullName>
    </alternativeName>
    <alternativeName>
        <fullName evidence="1">NADH:flavin oxidoreductase</fullName>
    </alternativeName>
</protein>